<comment type="function">
    <text evidence="1">Core subunit of the mitochondrial membrane respiratory chain NADH dehydrogenase (Complex I) which catalyzes electron transfer from NADH through the respiratory chain, using ubiquinone as an electron acceptor. Essential for the catalytic activity of complex I.</text>
</comment>
<comment type="catalytic activity">
    <reaction evidence="1">
        <text>a ubiquinone + NADH + 5 H(+)(in) = a ubiquinol + NAD(+) + 4 H(+)(out)</text>
        <dbReference type="Rhea" id="RHEA:29091"/>
        <dbReference type="Rhea" id="RHEA-COMP:9565"/>
        <dbReference type="Rhea" id="RHEA-COMP:9566"/>
        <dbReference type="ChEBI" id="CHEBI:15378"/>
        <dbReference type="ChEBI" id="CHEBI:16389"/>
        <dbReference type="ChEBI" id="CHEBI:17976"/>
        <dbReference type="ChEBI" id="CHEBI:57540"/>
        <dbReference type="ChEBI" id="CHEBI:57945"/>
        <dbReference type="EC" id="7.1.1.2"/>
    </reaction>
</comment>
<comment type="subunit">
    <text evidence="1">Core subunit of respiratory chain NADH dehydrogenase (Complex I) which is composed of 45 different subunits. Interacts with TMEM186. Interacts with TMEM242 (By similarity).</text>
</comment>
<comment type="subcellular location">
    <subcellularLocation>
        <location evidence="2">Mitochondrion inner membrane</location>
        <topology evidence="3">Multi-pass membrane protein</topology>
    </subcellularLocation>
</comment>
<comment type="similarity">
    <text evidence="4">Belongs to the complex I subunit 3 family.</text>
</comment>
<evidence type="ECO:0000250" key="1">
    <source>
        <dbReference type="UniProtKB" id="P03897"/>
    </source>
</evidence>
<evidence type="ECO:0000250" key="2">
    <source>
        <dbReference type="UniProtKB" id="P03898"/>
    </source>
</evidence>
<evidence type="ECO:0000255" key="3"/>
<evidence type="ECO:0000305" key="4"/>
<keyword id="KW-0249">Electron transport</keyword>
<keyword id="KW-0472">Membrane</keyword>
<keyword id="KW-0496">Mitochondrion</keyword>
<keyword id="KW-0999">Mitochondrion inner membrane</keyword>
<keyword id="KW-0520">NAD</keyword>
<keyword id="KW-0679">Respiratory chain</keyword>
<keyword id="KW-1278">Translocase</keyword>
<keyword id="KW-0812">Transmembrane</keyword>
<keyword id="KW-1133">Transmembrane helix</keyword>
<keyword id="KW-0813">Transport</keyword>
<keyword id="KW-0830">Ubiquinone</keyword>
<accession>O21575</accession>
<proteinExistence type="inferred from homology"/>
<gene>
    <name evidence="1" type="primary">MT-ND3</name>
    <name type="synonym">MTND3</name>
    <name type="synonym">NADH3</name>
    <name type="synonym">ND3</name>
</gene>
<name>NU3M_NEOLE</name>
<dbReference type="EC" id="7.1.1.2" evidence="1"/>
<dbReference type="EMBL" id="U83826">
    <property type="protein sequence ID" value="AAB87196.1"/>
    <property type="molecule type" value="Genomic_DNA"/>
</dbReference>
<dbReference type="SMR" id="O21575"/>
<dbReference type="GO" id="GO:0005743">
    <property type="term" value="C:mitochondrial inner membrane"/>
    <property type="evidence" value="ECO:0000250"/>
    <property type="project" value="UniProtKB"/>
</dbReference>
<dbReference type="GO" id="GO:0030964">
    <property type="term" value="C:NADH dehydrogenase complex"/>
    <property type="evidence" value="ECO:0007669"/>
    <property type="project" value="TreeGrafter"/>
</dbReference>
<dbReference type="GO" id="GO:0008137">
    <property type="term" value="F:NADH dehydrogenase (ubiquinone) activity"/>
    <property type="evidence" value="ECO:0000250"/>
    <property type="project" value="UniProtKB"/>
</dbReference>
<dbReference type="GO" id="GO:0006120">
    <property type="term" value="P:mitochondrial electron transport, NADH to ubiquinone"/>
    <property type="evidence" value="ECO:0000250"/>
    <property type="project" value="UniProtKB"/>
</dbReference>
<dbReference type="FunFam" id="1.20.58.1610:FF:000004">
    <property type="entry name" value="NADH-quinone oxidoreductase subunit A"/>
    <property type="match status" value="1"/>
</dbReference>
<dbReference type="Gene3D" id="1.20.58.1610">
    <property type="entry name" value="NADH:ubiquinone/plastoquinone oxidoreductase, chain 3"/>
    <property type="match status" value="1"/>
</dbReference>
<dbReference type="InterPro" id="IPR000440">
    <property type="entry name" value="NADH_UbQ/plastoQ_OxRdtase_su3"/>
</dbReference>
<dbReference type="InterPro" id="IPR038430">
    <property type="entry name" value="NDAH_ubi_oxred_su3_sf"/>
</dbReference>
<dbReference type="PANTHER" id="PTHR11058">
    <property type="entry name" value="NADH-UBIQUINONE OXIDOREDUCTASE CHAIN 3"/>
    <property type="match status" value="1"/>
</dbReference>
<dbReference type="PANTHER" id="PTHR11058:SF9">
    <property type="entry name" value="NADH-UBIQUINONE OXIDOREDUCTASE CHAIN 3"/>
    <property type="match status" value="1"/>
</dbReference>
<dbReference type="Pfam" id="PF00507">
    <property type="entry name" value="Oxidored_q4"/>
    <property type="match status" value="1"/>
</dbReference>
<organism>
    <name type="scientific">Neotoma lepida</name>
    <name type="common">Desert woodrat</name>
    <dbReference type="NCBI Taxonomy" id="56216"/>
    <lineage>
        <taxon>Eukaryota</taxon>
        <taxon>Metazoa</taxon>
        <taxon>Chordata</taxon>
        <taxon>Craniata</taxon>
        <taxon>Vertebrata</taxon>
        <taxon>Euteleostomi</taxon>
        <taxon>Mammalia</taxon>
        <taxon>Eutheria</taxon>
        <taxon>Euarchontoglires</taxon>
        <taxon>Glires</taxon>
        <taxon>Rodentia</taxon>
        <taxon>Myomorpha</taxon>
        <taxon>Muroidea</taxon>
        <taxon>Cricetidae</taxon>
        <taxon>Neotominae</taxon>
        <taxon>Neotoma</taxon>
    </lineage>
</organism>
<protein>
    <recommendedName>
        <fullName evidence="1">NADH-ubiquinone oxidoreductase chain 3</fullName>
        <ecNumber evidence="1">7.1.1.2</ecNumber>
    </recommendedName>
    <alternativeName>
        <fullName>NADH dehydrogenase subunit 3</fullName>
    </alternativeName>
</protein>
<geneLocation type="mitochondrion"/>
<sequence>MNMLLTMLTNITLSTLLISIAFWLPQLNIYTEKANPYECGFDPMSSARLPFSMKFFLVAITFLLFDLEIALLLPIPWAIQVKDINTMTLTAFILVSILALGLAYEWTQKGLEWTE</sequence>
<feature type="chain" id="PRO_0000117770" description="NADH-ubiquinone oxidoreductase chain 3">
    <location>
        <begin position="1"/>
        <end position="115"/>
    </location>
</feature>
<feature type="transmembrane region" description="Helical" evidence="3">
    <location>
        <begin position="4"/>
        <end position="24"/>
    </location>
</feature>
<feature type="transmembrane region" description="Helical" evidence="3">
    <location>
        <begin position="55"/>
        <end position="75"/>
    </location>
</feature>
<feature type="transmembrane region" description="Helical" evidence="3">
    <location>
        <begin position="84"/>
        <end position="104"/>
    </location>
</feature>
<reference key="1">
    <citation type="journal article" date="1998" name="Mol. Biol. Evol.">
        <title>Molecular systematics and paleobiogeography of the South American sigmodontine rodents.</title>
        <authorList>
            <person name="Engel S.R."/>
            <person name="Hogan K.M."/>
            <person name="Taylor J.F."/>
            <person name="Davis S.K."/>
        </authorList>
    </citation>
    <scope>NUCLEOTIDE SEQUENCE [GENOMIC DNA]</scope>
</reference>